<reference key="1">
    <citation type="journal article" date="2000" name="Nature">
        <title>Sequence and analysis of chromosome 3 of the plant Arabidopsis thaliana.</title>
        <authorList>
            <person name="Salanoubat M."/>
            <person name="Lemcke K."/>
            <person name="Rieger M."/>
            <person name="Ansorge W."/>
            <person name="Unseld M."/>
            <person name="Fartmann B."/>
            <person name="Valle G."/>
            <person name="Bloecker H."/>
            <person name="Perez-Alonso M."/>
            <person name="Obermaier B."/>
            <person name="Delseny M."/>
            <person name="Boutry M."/>
            <person name="Grivell L.A."/>
            <person name="Mache R."/>
            <person name="Puigdomenech P."/>
            <person name="De Simone V."/>
            <person name="Choisne N."/>
            <person name="Artiguenave F."/>
            <person name="Robert C."/>
            <person name="Brottier P."/>
            <person name="Wincker P."/>
            <person name="Cattolico L."/>
            <person name="Weissenbach J."/>
            <person name="Saurin W."/>
            <person name="Quetier F."/>
            <person name="Schaefer M."/>
            <person name="Mueller-Auer S."/>
            <person name="Gabel C."/>
            <person name="Fuchs M."/>
            <person name="Benes V."/>
            <person name="Wurmbach E."/>
            <person name="Drzonek H."/>
            <person name="Erfle H."/>
            <person name="Jordan N."/>
            <person name="Bangert S."/>
            <person name="Wiedelmann R."/>
            <person name="Kranz H."/>
            <person name="Voss H."/>
            <person name="Holland R."/>
            <person name="Brandt P."/>
            <person name="Nyakatura G."/>
            <person name="Vezzi A."/>
            <person name="D'Angelo M."/>
            <person name="Pallavicini A."/>
            <person name="Toppo S."/>
            <person name="Simionati B."/>
            <person name="Conrad A."/>
            <person name="Hornischer K."/>
            <person name="Kauer G."/>
            <person name="Loehnert T.-H."/>
            <person name="Nordsiek G."/>
            <person name="Reichelt J."/>
            <person name="Scharfe M."/>
            <person name="Schoen O."/>
            <person name="Bargues M."/>
            <person name="Terol J."/>
            <person name="Climent J."/>
            <person name="Navarro P."/>
            <person name="Collado C."/>
            <person name="Perez-Perez A."/>
            <person name="Ottenwaelder B."/>
            <person name="Duchemin D."/>
            <person name="Cooke R."/>
            <person name="Laudie M."/>
            <person name="Berger-Llauro C."/>
            <person name="Purnelle B."/>
            <person name="Masuy D."/>
            <person name="de Haan M."/>
            <person name="Maarse A.C."/>
            <person name="Alcaraz J.-P."/>
            <person name="Cottet A."/>
            <person name="Casacuberta E."/>
            <person name="Monfort A."/>
            <person name="Argiriou A."/>
            <person name="Flores M."/>
            <person name="Liguori R."/>
            <person name="Vitale D."/>
            <person name="Mannhaupt G."/>
            <person name="Haase D."/>
            <person name="Schoof H."/>
            <person name="Rudd S."/>
            <person name="Zaccaria P."/>
            <person name="Mewes H.-W."/>
            <person name="Mayer K.F.X."/>
            <person name="Kaul S."/>
            <person name="Town C.D."/>
            <person name="Koo H.L."/>
            <person name="Tallon L.J."/>
            <person name="Jenkins J."/>
            <person name="Rooney T."/>
            <person name="Rizzo M."/>
            <person name="Walts A."/>
            <person name="Utterback T."/>
            <person name="Fujii C.Y."/>
            <person name="Shea T.P."/>
            <person name="Creasy T.H."/>
            <person name="Haas B."/>
            <person name="Maiti R."/>
            <person name="Wu D."/>
            <person name="Peterson J."/>
            <person name="Van Aken S."/>
            <person name="Pai G."/>
            <person name="Militscher J."/>
            <person name="Sellers P."/>
            <person name="Gill J.E."/>
            <person name="Feldblyum T.V."/>
            <person name="Preuss D."/>
            <person name="Lin X."/>
            <person name="Nierman W.C."/>
            <person name="Salzberg S.L."/>
            <person name="White O."/>
            <person name="Venter J.C."/>
            <person name="Fraser C.M."/>
            <person name="Kaneko T."/>
            <person name="Nakamura Y."/>
            <person name="Sato S."/>
            <person name="Kato T."/>
            <person name="Asamizu E."/>
            <person name="Sasamoto S."/>
            <person name="Kimura T."/>
            <person name="Idesawa K."/>
            <person name="Kawashima K."/>
            <person name="Kishida Y."/>
            <person name="Kiyokawa C."/>
            <person name="Kohara M."/>
            <person name="Matsumoto M."/>
            <person name="Matsuno A."/>
            <person name="Muraki A."/>
            <person name="Nakayama S."/>
            <person name="Nakazaki N."/>
            <person name="Shinpo S."/>
            <person name="Takeuchi C."/>
            <person name="Wada T."/>
            <person name="Watanabe A."/>
            <person name="Yamada M."/>
            <person name="Yasuda M."/>
            <person name="Tabata S."/>
        </authorList>
    </citation>
    <scope>NUCLEOTIDE SEQUENCE [LARGE SCALE GENOMIC DNA]</scope>
    <source>
        <strain>cv. Columbia</strain>
    </source>
</reference>
<reference key="2">
    <citation type="journal article" date="2017" name="Plant J.">
        <title>Araport11: a complete reannotation of the Arabidopsis thaliana reference genome.</title>
        <authorList>
            <person name="Cheng C.Y."/>
            <person name="Krishnakumar V."/>
            <person name="Chan A.P."/>
            <person name="Thibaud-Nissen F."/>
            <person name="Schobel S."/>
            <person name="Town C.D."/>
        </authorList>
    </citation>
    <scope>GENOME REANNOTATION</scope>
    <source>
        <strain>cv. Columbia</strain>
    </source>
</reference>
<reference key="3">
    <citation type="submission" date="2004-09" db="EMBL/GenBank/DDBJ databases">
        <title>Large-scale analysis of RIKEN Arabidopsis full-length (RAFL) cDNAs.</title>
        <authorList>
            <person name="Totoki Y."/>
            <person name="Seki M."/>
            <person name="Ishida J."/>
            <person name="Nakajima M."/>
            <person name="Enju A."/>
            <person name="Kamiya A."/>
            <person name="Narusaka M."/>
            <person name="Shin-i T."/>
            <person name="Nakagawa M."/>
            <person name="Sakamoto N."/>
            <person name="Oishi K."/>
            <person name="Kohara Y."/>
            <person name="Kobayashi M."/>
            <person name="Toyoda A."/>
            <person name="Sakaki Y."/>
            <person name="Sakurai T."/>
            <person name="Iida K."/>
            <person name="Akiyama K."/>
            <person name="Satou M."/>
            <person name="Toyoda T."/>
            <person name="Konagaya A."/>
            <person name="Carninci P."/>
            <person name="Kawai J."/>
            <person name="Hayashizaki Y."/>
            <person name="Shinozaki K."/>
        </authorList>
    </citation>
    <scope>NUCLEOTIDE SEQUENCE [LARGE SCALE MRNA]</scope>
    <source>
        <strain>cv. Columbia</strain>
    </source>
</reference>
<reference key="4">
    <citation type="submission" date="2006-04" db="EMBL/GenBank/DDBJ databases">
        <title>Arabidopsis ORF clones.</title>
        <authorList>
            <person name="Shinn P."/>
            <person name="Chen H."/>
            <person name="Kim C.J."/>
            <person name="Ecker J.R."/>
        </authorList>
    </citation>
    <scope>NUCLEOTIDE SEQUENCE [LARGE SCALE MRNA]</scope>
    <source>
        <strain>cv. Columbia</strain>
    </source>
</reference>
<reference key="5">
    <citation type="submission" date="2002-03" db="EMBL/GenBank/DDBJ databases">
        <title>Full-length cDNA from Arabidopsis thaliana.</title>
        <authorList>
            <person name="Brover V.V."/>
            <person name="Troukhan M.E."/>
            <person name="Alexandrov N.A."/>
            <person name="Lu Y.-P."/>
            <person name="Flavell R.B."/>
            <person name="Feldmann K.A."/>
        </authorList>
    </citation>
    <scope>NUCLEOTIDE SEQUENCE [LARGE SCALE MRNA]</scope>
</reference>
<reference key="6">
    <citation type="journal article" date="2003" name="Plant Cell">
        <title>The Arabidopsis basic/helix-loop-helix transcription factor family.</title>
        <authorList>
            <person name="Toledo-Ortiz G."/>
            <person name="Huq E."/>
            <person name="Quail P.H."/>
        </authorList>
    </citation>
    <scope>GENE FAMILY</scope>
    <scope>NOMENCLATURE</scope>
</reference>
<reference key="7">
    <citation type="journal article" date="2003" name="Plant Cell">
        <title>Update on the basic helix-loop-helix transcription factor gene family in Arabidopsis thaliana.</title>
        <authorList>
            <person name="Bailey P.C."/>
            <person name="Martin C."/>
            <person name="Toledo-Ortiz G."/>
            <person name="Quail P.H."/>
            <person name="Huq E."/>
            <person name="Heim M.A."/>
            <person name="Jakoby M."/>
            <person name="Werber M."/>
            <person name="Weisshaar B."/>
        </authorList>
    </citation>
    <scope>GENE FAMILY</scope>
    <scope>NOMENCLATURE</scope>
</reference>
<reference key="8">
    <citation type="journal article" date="2009" name="Plant Cell">
        <title>Regulation of Arabidopsis brassinosteroid signaling by atypical basic helix-loop-helix proteins.</title>
        <authorList>
            <person name="Wang H."/>
            <person name="Zhu Y."/>
            <person name="Fujioka S."/>
            <person name="Asami T."/>
            <person name="Li J."/>
            <person name="Li J."/>
        </authorList>
    </citation>
    <scope>FUNCTION</scope>
    <scope>INTERACTION WITH PRE3 AND ASK7</scope>
    <scope>SUBCELLULAR LOCATION</scope>
    <source>
        <strain>cv. Columbia</strain>
    </source>
</reference>
<sequence>MSSEQGNGSNPSTSPEVEGTKTIPFRRRLQRGQRVFAPKLMEALRRSRVSSEEAPVRHLSRRWRATTAQKVYSLKLYDALQRSRRSATVRDTADKVLATTARGATRWSRAILVSRFGTSLRRRRNTKPASALAAAIRGSGGSGRRRKLSAVGNRVRVLGGLVPGCRRTALPELLDETADYIAALEMQVRAMTALSKILSELQPSTNLGSAL</sequence>
<evidence type="ECO:0000255" key="1">
    <source>
        <dbReference type="PROSITE-ProRule" id="PRU00981"/>
    </source>
</evidence>
<evidence type="ECO:0000256" key="2">
    <source>
        <dbReference type="SAM" id="MobiDB-lite"/>
    </source>
</evidence>
<evidence type="ECO:0000269" key="3">
    <source>
    </source>
</evidence>
<evidence type="ECO:0000305" key="4"/>
<gene>
    <name type="primary">BHLH150</name>
    <name type="synonym">AIF1</name>
    <name type="synonym">EN145</name>
    <name type="ordered locus">At3g05800</name>
    <name type="ORF">F10A16.9</name>
</gene>
<proteinExistence type="evidence at protein level"/>
<feature type="chain" id="PRO_0000358827" description="Transcription factor bHLH150">
    <location>
        <begin position="1"/>
        <end position="211"/>
    </location>
</feature>
<feature type="domain" description="bHLH" evidence="1">
    <location>
        <begin position="135"/>
        <end position="184"/>
    </location>
</feature>
<feature type="region of interest" description="Disordered" evidence="2">
    <location>
        <begin position="1"/>
        <end position="23"/>
    </location>
</feature>
<feature type="compositionally biased region" description="Polar residues" evidence="2">
    <location>
        <begin position="1"/>
        <end position="15"/>
    </location>
</feature>
<keyword id="KW-0238">DNA-binding</keyword>
<keyword id="KW-0539">Nucleus</keyword>
<keyword id="KW-0597">Phosphoprotein</keyword>
<keyword id="KW-1185">Reference proteome</keyword>
<keyword id="KW-0804">Transcription</keyword>
<keyword id="KW-0805">Transcription regulation</keyword>
<protein>
    <recommendedName>
        <fullName>Transcription factor bHLH150</fullName>
    </recommendedName>
    <alternativeName>
        <fullName>ATBS1 interacting factor 1</fullName>
    </alternativeName>
    <alternativeName>
        <fullName>Basic helix-loop-helix protein 150</fullName>
        <shortName>AtbHLH150</shortName>
        <shortName>bHLH 150</shortName>
    </alternativeName>
    <alternativeName>
        <fullName>Transcription factor EN 145</fullName>
    </alternativeName>
    <alternativeName>
        <fullName>bHLH transcription factor bHLH150</fullName>
    </alternativeName>
</protein>
<organism>
    <name type="scientific">Arabidopsis thaliana</name>
    <name type="common">Mouse-ear cress</name>
    <dbReference type="NCBI Taxonomy" id="3702"/>
    <lineage>
        <taxon>Eukaryota</taxon>
        <taxon>Viridiplantae</taxon>
        <taxon>Streptophyta</taxon>
        <taxon>Embryophyta</taxon>
        <taxon>Tracheophyta</taxon>
        <taxon>Spermatophyta</taxon>
        <taxon>Magnoliopsida</taxon>
        <taxon>eudicotyledons</taxon>
        <taxon>Gunneridae</taxon>
        <taxon>Pentapetalae</taxon>
        <taxon>rosids</taxon>
        <taxon>malvids</taxon>
        <taxon>Brassicales</taxon>
        <taxon>Brassicaceae</taxon>
        <taxon>Camelineae</taxon>
        <taxon>Arabidopsis</taxon>
    </lineage>
</organism>
<comment type="function">
    <text evidence="3">Atypical bHLH transcription factor probably unable to bind DNA. Negatively regulates brassinosteroid signaling.</text>
</comment>
<comment type="subunit">
    <text evidence="3 4">Homodimer (Probable). Interacts with PRE3 and ASK7.</text>
</comment>
<comment type="subcellular location">
    <subcellularLocation>
        <location evidence="1 3">Nucleus</location>
    </subcellularLocation>
</comment>
<comment type="PTM">
    <text>Phosphorylated by ASK7.</text>
</comment>
<name>BH150_ARATH</name>
<dbReference type="EMBL" id="AC012393">
    <property type="protein sequence ID" value="AAF26082.1"/>
    <property type="molecule type" value="Genomic_DNA"/>
</dbReference>
<dbReference type="EMBL" id="CP002686">
    <property type="protein sequence ID" value="AEE74298.1"/>
    <property type="molecule type" value="Genomic_DNA"/>
</dbReference>
<dbReference type="EMBL" id="AK176115">
    <property type="protein sequence ID" value="BAD43878.1"/>
    <property type="molecule type" value="mRNA"/>
</dbReference>
<dbReference type="EMBL" id="AK176853">
    <property type="protein sequence ID" value="BAD44616.1"/>
    <property type="molecule type" value="mRNA"/>
</dbReference>
<dbReference type="EMBL" id="BT025269">
    <property type="protein sequence ID" value="ABF19022.1"/>
    <property type="molecule type" value="mRNA"/>
</dbReference>
<dbReference type="EMBL" id="AY086128">
    <property type="protein sequence ID" value="AAM63334.1"/>
    <property type="molecule type" value="mRNA"/>
</dbReference>
<dbReference type="RefSeq" id="NP_566260.1">
    <property type="nucleotide sequence ID" value="NM_111454.3"/>
</dbReference>
<dbReference type="SMR" id="Q9M9L6"/>
<dbReference type="BioGRID" id="5084">
    <property type="interactions" value="1"/>
</dbReference>
<dbReference type="FunCoup" id="Q9M9L6">
    <property type="interactions" value="1"/>
</dbReference>
<dbReference type="IntAct" id="Q9M9L6">
    <property type="interactions" value="1"/>
</dbReference>
<dbReference type="STRING" id="3702.Q9M9L6"/>
<dbReference type="PaxDb" id="3702-AT3G05800.1"/>
<dbReference type="EnsemblPlants" id="AT3G05800.1">
    <property type="protein sequence ID" value="AT3G05800.1"/>
    <property type="gene ID" value="AT3G05800"/>
</dbReference>
<dbReference type="GeneID" id="819749"/>
<dbReference type="Gramene" id="AT3G05800.1">
    <property type="protein sequence ID" value="AT3G05800.1"/>
    <property type="gene ID" value="AT3G05800"/>
</dbReference>
<dbReference type="KEGG" id="ath:AT3G05800"/>
<dbReference type="Araport" id="AT3G05800"/>
<dbReference type="TAIR" id="AT3G05800">
    <property type="gene designation" value="AIF1"/>
</dbReference>
<dbReference type="HOGENOM" id="CLU_090794_1_0_1"/>
<dbReference type="InParanoid" id="Q9M9L6"/>
<dbReference type="OMA" id="HKHTKPA"/>
<dbReference type="OrthoDB" id="1647165at2759"/>
<dbReference type="PhylomeDB" id="Q9M9L6"/>
<dbReference type="PRO" id="PR:Q9M9L6"/>
<dbReference type="Proteomes" id="UP000006548">
    <property type="component" value="Chromosome 3"/>
</dbReference>
<dbReference type="ExpressionAtlas" id="Q9M9L6">
    <property type="expression patterns" value="baseline and differential"/>
</dbReference>
<dbReference type="GO" id="GO:0005634">
    <property type="term" value="C:nucleus"/>
    <property type="evidence" value="ECO:0000314"/>
    <property type="project" value="TAIR"/>
</dbReference>
<dbReference type="GO" id="GO:0003700">
    <property type="term" value="F:DNA-binding transcription factor activity"/>
    <property type="evidence" value="ECO:0000250"/>
    <property type="project" value="TAIR"/>
</dbReference>
<dbReference type="GO" id="GO:0046983">
    <property type="term" value="F:protein dimerization activity"/>
    <property type="evidence" value="ECO:0007669"/>
    <property type="project" value="InterPro"/>
</dbReference>
<dbReference type="GO" id="GO:0000976">
    <property type="term" value="F:transcription cis-regulatory region binding"/>
    <property type="evidence" value="ECO:0000353"/>
    <property type="project" value="TAIR"/>
</dbReference>
<dbReference type="GO" id="GO:0009742">
    <property type="term" value="P:brassinosteroid mediated signaling pathway"/>
    <property type="evidence" value="ECO:0000316"/>
    <property type="project" value="TAIR"/>
</dbReference>
<dbReference type="GO" id="GO:0006355">
    <property type="term" value="P:regulation of DNA-templated transcription"/>
    <property type="evidence" value="ECO:0000304"/>
    <property type="project" value="TAIR"/>
</dbReference>
<dbReference type="CDD" id="cd11444">
    <property type="entry name" value="bHLH_AtIBH1_like"/>
    <property type="match status" value="1"/>
</dbReference>
<dbReference type="InterPro" id="IPR044549">
    <property type="entry name" value="bHLH_AtIBH1-like"/>
</dbReference>
<dbReference type="InterPro" id="IPR011598">
    <property type="entry name" value="bHLH_dom"/>
</dbReference>
<dbReference type="InterPro" id="IPR036638">
    <property type="entry name" value="HLH_DNA-bd_sf"/>
</dbReference>
<dbReference type="InterPro" id="IPR044660">
    <property type="entry name" value="IBH1-like"/>
</dbReference>
<dbReference type="PANTHER" id="PTHR33124:SF46">
    <property type="entry name" value="TRANSCRIPTION FACTOR BHLH150"/>
    <property type="match status" value="1"/>
</dbReference>
<dbReference type="PANTHER" id="PTHR33124">
    <property type="entry name" value="TRANSCRIPTION FACTOR IBH1-LIKE 1"/>
    <property type="match status" value="1"/>
</dbReference>
<dbReference type="SUPFAM" id="SSF47459">
    <property type="entry name" value="HLH, helix-loop-helix DNA-binding domain"/>
    <property type="match status" value="1"/>
</dbReference>
<dbReference type="PROSITE" id="PS50888">
    <property type="entry name" value="BHLH"/>
    <property type="match status" value="1"/>
</dbReference>
<accession>Q9M9L6</accession>
<accession>Q67ZK2</accession>